<comment type="function">
    <text evidence="2">With S4 and S5 plays an important role in translational accuracy.</text>
</comment>
<comment type="function">
    <text evidence="2">Interacts with and stabilizes bases of the 16S rRNA that are involved in tRNA selection in the A site and with the mRNA backbone. Located at the interface of the 30S and 50S subunits, it traverses the body of the 30S subunit contacting proteins on the other side and probably holding the rRNA structure together. The combined cluster of proteins S8, S12 and S17 appears to hold together the shoulder and platform of the 30S subunit.</text>
</comment>
<comment type="subunit">
    <text evidence="2">Part of the 30S ribosomal subunit. Contacts proteins S8 and S17. May interact with IF1 in the 30S initiation complex.</text>
</comment>
<comment type="similarity">
    <text evidence="2">Belongs to the universal ribosomal protein uS12 family.</text>
</comment>
<reference key="1">
    <citation type="journal article" date="2009" name="Appl. Environ. Microbiol.">
        <title>Complete genome sequence of the chemolithoautotrophic marine magnetotactic coccus strain MC-1.</title>
        <authorList>
            <person name="Schubbe S."/>
            <person name="Williams T.J."/>
            <person name="Xie G."/>
            <person name="Kiss H.E."/>
            <person name="Brettin T.S."/>
            <person name="Martinez D."/>
            <person name="Ross C.A."/>
            <person name="Schuler D."/>
            <person name="Cox B.L."/>
            <person name="Nealson K.H."/>
            <person name="Bazylinski D.A."/>
        </authorList>
    </citation>
    <scope>NUCLEOTIDE SEQUENCE [LARGE SCALE GENOMIC DNA]</scope>
    <source>
        <strain>ATCC BAA-1437 / JCM 17883 / MC-1</strain>
    </source>
</reference>
<accession>A0L5W8</accession>
<gene>
    <name evidence="2" type="primary">rpsL</name>
    <name type="ordered locus">Mmc1_0842</name>
</gene>
<evidence type="ECO:0000250" key="1"/>
<evidence type="ECO:0000255" key="2">
    <source>
        <dbReference type="HAMAP-Rule" id="MF_00403"/>
    </source>
</evidence>
<evidence type="ECO:0000256" key="3">
    <source>
        <dbReference type="SAM" id="MobiDB-lite"/>
    </source>
</evidence>
<evidence type="ECO:0000305" key="4"/>
<organism>
    <name type="scientific">Magnetococcus marinus (strain ATCC BAA-1437 / JCM 17883 / MC-1)</name>
    <dbReference type="NCBI Taxonomy" id="156889"/>
    <lineage>
        <taxon>Bacteria</taxon>
        <taxon>Pseudomonadati</taxon>
        <taxon>Pseudomonadota</taxon>
        <taxon>Alphaproteobacteria</taxon>
        <taxon>Magnetococcales</taxon>
        <taxon>Magnetococcaceae</taxon>
        <taxon>Magnetococcus</taxon>
    </lineage>
</organism>
<proteinExistence type="inferred from homology"/>
<feature type="chain" id="PRO_0000295996" description="Small ribosomal subunit protein uS12">
    <location>
        <begin position="1"/>
        <end position="123"/>
    </location>
</feature>
<feature type="region of interest" description="Disordered" evidence="3">
    <location>
        <begin position="102"/>
        <end position="123"/>
    </location>
</feature>
<feature type="compositionally biased region" description="Basic residues" evidence="3">
    <location>
        <begin position="113"/>
        <end position="123"/>
    </location>
</feature>
<feature type="modified residue" description="3-methylthioaspartic acid" evidence="1">
    <location>
        <position position="89"/>
    </location>
</feature>
<dbReference type="EMBL" id="CP000471">
    <property type="protein sequence ID" value="ABK43361.1"/>
    <property type="molecule type" value="Genomic_DNA"/>
</dbReference>
<dbReference type="RefSeq" id="WP_011712521.1">
    <property type="nucleotide sequence ID" value="NC_008576.1"/>
</dbReference>
<dbReference type="SMR" id="A0L5W8"/>
<dbReference type="STRING" id="156889.Mmc1_0842"/>
<dbReference type="KEGG" id="mgm:Mmc1_0842"/>
<dbReference type="eggNOG" id="COG0048">
    <property type="taxonomic scope" value="Bacteria"/>
</dbReference>
<dbReference type="HOGENOM" id="CLU_104295_1_2_5"/>
<dbReference type="OrthoDB" id="9802366at2"/>
<dbReference type="Proteomes" id="UP000002586">
    <property type="component" value="Chromosome"/>
</dbReference>
<dbReference type="GO" id="GO:0015935">
    <property type="term" value="C:small ribosomal subunit"/>
    <property type="evidence" value="ECO:0007669"/>
    <property type="project" value="InterPro"/>
</dbReference>
<dbReference type="GO" id="GO:0019843">
    <property type="term" value="F:rRNA binding"/>
    <property type="evidence" value="ECO:0007669"/>
    <property type="project" value="UniProtKB-UniRule"/>
</dbReference>
<dbReference type="GO" id="GO:0003735">
    <property type="term" value="F:structural constituent of ribosome"/>
    <property type="evidence" value="ECO:0007669"/>
    <property type="project" value="InterPro"/>
</dbReference>
<dbReference type="GO" id="GO:0000049">
    <property type="term" value="F:tRNA binding"/>
    <property type="evidence" value="ECO:0007669"/>
    <property type="project" value="UniProtKB-UniRule"/>
</dbReference>
<dbReference type="GO" id="GO:0006412">
    <property type="term" value="P:translation"/>
    <property type="evidence" value="ECO:0007669"/>
    <property type="project" value="UniProtKB-UniRule"/>
</dbReference>
<dbReference type="CDD" id="cd03368">
    <property type="entry name" value="Ribosomal_S12"/>
    <property type="match status" value="1"/>
</dbReference>
<dbReference type="FunFam" id="2.40.50.140:FF:000001">
    <property type="entry name" value="30S ribosomal protein S12"/>
    <property type="match status" value="1"/>
</dbReference>
<dbReference type="Gene3D" id="2.40.50.140">
    <property type="entry name" value="Nucleic acid-binding proteins"/>
    <property type="match status" value="1"/>
</dbReference>
<dbReference type="HAMAP" id="MF_00403_B">
    <property type="entry name" value="Ribosomal_uS12_B"/>
    <property type="match status" value="1"/>
</dbReference>
<dbReference type="InterPro" id="IPR012340">
    <property type="entry name" value="NA-bd_OB-fold"/>
</dbReference>
<dbReference type="InterPro" id="IPR006032">
    <property type="entry name" value="Ribosomal_uS12"/>
</dbReference>
<dbReference type="InterPro" id="IPR005679">
    <property type="entry name" value="Ribosomal_uS12_bac"/>
</dbReference>
<dbReference type="NCBIfam" id="TIGR00981">
    <property type="entry name" value="rpsL_bact"/>
    <property type="match status" value="1"/>
</dbReference>
<dbReference type="PANTHER" id="PTHR11652">
    <property type="entry name" value="30S RIBOSOMAL PROTEIN S12 FAMILY MEMBER"/>
    <property type="match status" value="1"/>
</dbReference>
<dbReference type="Pfam" id="PF00164">
    <property type="entry name" value="Ribosom_S12_S23"/>
    <property type="match status" value="1"/>
</dbReference>
<dbReference type="PIRSF" id="PIRSF002133">
    <property type="entry name" value="Ribosomal_S12/S23"/>
    <property type="match status" value="1"/>
</dbReference>
<dbReference type="PRINTS" id="PR01034">
    <property type="entry name" value="RIBOSOMALS12"/>
</dbReference>
<dbReference type="SUPFAM" id="SSF50249">
    <property type="entry name" value="Nucleic acid-binding proteins"/>
    <property type="match status" value="1"/>
</dbReference>
<dbReference type="PROSITE" id="PS00055">
    <property type="entry name" value="RIBOSOMAL_S12"/>
    <property type="match status" value="1"/>
</dbReference>
<keyword id="KW-0488">Methylation</keyword>
<keyword id="KW-1185">Reference proteome</keyword>
<keyword id="KW-0687">Ribonucleoprotein</keyword>
<keyword id="KW-0689">Ribosomal protein</keyword>
<keyword id="KW-0694">RNA-binding</keyword>
<keyword id="KW-0699">rRNA-binding</keyword>
<keyword id="KW-0820">tRNA-binding</keyword>
<name>RS12_MAGMM</name>
<sequence length="123" mass="13755">MPTVNQLVRLGRKPQKKKTNVPALQACPQRRGVCTRVYTTTPKKPNSALRKVARVRLTNGHEVSAYIPGEGHNLQEHSVVLIRGGRVKDLPGVRYHILRGSLDTQGVKDRKQGRSKYGAKRPK</sequence>
<protein>
    <recommendedName>
        <fullName evidence="2">Small ribosomal subunit protein uS12</fullName>
    </recommendedName>
    <alternativeName>
        <fullName evidence="4">30S ribosomal protein S12</fullName>
    </alternativeName>
</protein>